<name>SYC_CHRVO</name>
<sequence>MLSLYNTLTRQKEAFKPIEPGKVSMYVCGMTVYDLCHIGHARMLAAFDVIYRWLKASGYDVNYVRNITDIEDKIIKRALERGITPEQLVEETIADMRQDAAALGLLPPTHEPRATHHVGGMVAMIEQLIANGKAYPAANGDVYYAVREFEGYGKLSGRTLDKLRAGERVEVDPNKRDPLDFVLWKAAKPGEPSWDSPWGKGRPGWHIECSVMSCHHLGEHFDIHGGGEDLQFPHHENEIAQSEGAHGHQYVNYWLHNGFINVDGEKMSKSLGNFFTIRDVLQHFDGEVIRFFIVRSHYRSPVNYTDSILNDAKHGLTRLYTALRGIELPTSDGIDWNHAYAARFKAAMDDDFGTSEAVAVLFELAGEVNKSRDPQLARLLKDLGGVLGLLTRDPEVFLQGGVGEGELSAEQVEALIQARKDARAAKDWAESDRIRDELTAKGIVLEDGAGGTIWRRA</sequence>
<reference key="1">
    <citation type="journal article" date="2003" name="Proc. Natl. Acad. Sci. U.S.A.">
        <title>The complete genome sequence of Chromobacterium violaceum reveals remarkable and exploitable bacterial adaptability.</title>
        <authorList>
            <person name="Vasconcelos A.T.R."/>
            <person name="de Almeida D.F."/>
            <person name="Hungria M."/>
            <person name="Guimaraes C.T."/>
            <person name="Antonio R.V."/>
            <person name="Almeida F.C."/>
            <person name="de Almeida L.G.P."/>
            <person name="de Almeida R."/>
            <person name="Alves-Gomes J.A."/>
            <person name="Andrade E.M."/>
            <person name="Araripe J."/>
            <person name="de Araujo M.F.F."/>
            <person name="Astolfi-Filho S."/>
            <person name="Azevedo V."/>
            <person name="Baptista A.J."/>
            <person name="Bataus L.A.M."/>
            <person name="Batista J.S."/>
            <person name="Belo A."/>
            <person name="van den Berg C."/>
            <person name="Bogo M."/>
            <person name="Bonatto S."/>
            <person name="Bordignon J."/>
            <person name="Brigido M.M."/>
            <person name="Brito C.A."/>
            <person name="Brocchi M."/>
            <person name="Burity H.A."/>
            <person name="Camargo A.A."/>
            <person name="Cardoso D.D.P."/>
            <person name="Carneiro N.P."/>
            <person name="Carraro D.M."/>
            <person name="Carvalho C.M.B."/>
            <person name="Cascardo J.C.M."/>
            <person name="Cavada B.S."/>
            <person name="Chueire L.M.O."/>
            <person name="Creczynski-Pasa T.B."/>
            <person name="Cunha-Junior N.C."/>
            <person name="Fagundes N."/>
            <person name="Falcao C.L."/>
            <person name="Fantinatti F."/>
            <person name="Farias I.P."/>
            <person name="Felipe M.S.S."/>
            <person name="Ferrari L.P."/>
            <person name="Ferro J.A."/>
            <person name="Ferro M.I.T."/>
            <person name="Franco G.R."/>
            <person name="Freitas N.S.A."/>
            <person name="Furlan L.R."/>
            <person name="Gazzinelli R.T."/>
            <person name="Gomes E.A."/>
            <person name="Goncalves P.R."/>
            <person name="Grangeiro T.B."/>
            <person name="Grattapaglia D."/>
            <person name="Grisard E.C."/>
            <person name="Hanna E.S."/>
            <person name="Jardim S.N."/>
            <person name="Laurino J."/>
            <person name="Leoi L.C.T."/>
            <person name="Lima L.F.A."/>
            <person name="Loureiro M.F."/>
            <person name="Lyra M.C.C.P."/>
            <person name="Madeira H.M.F."/>
            <person name="Manfio G.P."/>
            <person name="Maranhao A.Q."/>
            <person name="Martins W.S."/>
            <person name="di Mauro S.M.Z."/>
            <person name="de Medeiros S.R.B."/>
            <person name="Meissner R.V."/>
            <person name="Moreira M.A.M."/>
            <person name="Nascimento F.F."/>
            <person name="Nicolas M.F."/>
            <person name="Oliveira J.G."/>
            <person name="Oliveira S.C."/>
            <person name="Paixao R.F.C."/>
            <person name="Parente J.A."/>
            <person name="Pedrosa F.O."/>
            <person name="Pena S.D.J."/>
            <person name="Pereira J.O."/>
            <person name="Pereira M."/>
            <person name="Pinto L.S.R.C."/>
            <person name="Pinto L.S."/>
            <person name="Porto J.I.R."/>
            <person name="Potrich D.P."/>
            <person name="Ramalho-Neto C.E."/>
            <person name="Reis A.M.M."/>
            <person name="Rigo L.U."/>
            <person name="Rondinelli E."/>
            <person name="Santos E.B.P."/>
            <person name="Santos F.R."/>
            <person name="Schneider M.P.C."/>
            <person name="Seuanez H.N."/>
            <person name="Silva A.M.R."/>
            <person name="da Silva A.L.C."/>
            <person name="Silva D.W."/>
            <person name="Silva R."/>
            <person name="Simoes I.C."/>
            <person name="Simon D."/>
            <person name="Soares C.M.A."/>
            <person name="Soares R.B.A."/>
            <person name="Souza E.M."/>
            <person name="Souza K.R.L."/>
            <person name="Souza R.C."/>
            <person name="Steffens M.B.R."/>
            <person name="Steindel M."/>
            <person name="Teixeira S.R."/>
            <person name="Urmenyi T."/>
            <person name="Vettore A."/>
            <person name="Wassem R."/>
            <person name="Zaha A."/>
            <person name="Simpson A.J.G."/>
        </authorList>
    </citation>
    <scope>NUCLEOTIDE SEQUENCE [LARGE SCALE GENOMIC DNA]</scope>
    <source>
        <strain>ATCC 12472 / DSM 30191 / JCM 1249 / CCUG 213 / NBRC 12614 / NCIMB 9131 / NCTC 9757 / MK</strain>
    </source>
</reference>
<organism>
    <name type="scientific">Chromobacterium violaceum (strain ATCC 12472 / DSM 30191 / JCM 1249 / CCUG 213 / NBRC 12614 / NCIMB 9131 / NCTC 9757 / MK)</name>
    <dbReference type="NCBI Taxonomy" id="243365"/>
    <lineage>
        <taxon>Bacteria</taxon>
        <taxon>Pseudomonadati</taxon>
        <taxon>Pseudomonadota</taxon>
        <taxon>Betaproteobacteria</taxon>
        <taxon>Neisseriales</taxon>
        <taxon>Chromobacteriaceae</taxon>
        <taxon>Chromobacterium</taxon>
    </lineage>
</organism>
<comment type="catalytic activity">
    <reaction evidence="1">
        <text>tRNA(Cys) + L-cysteine + ATP = L-cysteinyl-tRNA(Cys) + AMP + diphosphate</text>
        <dbReference type="Rhea" id="RHEA:17773"/>
        <dbReference type="Rhea" id="RHEA-COMP:9661"/>
        <dbReference type="Rhea" id="RHEA-COMP:9679"/>
        <dbReference type="ChEBI" id="CHEBI:30616"/>
        <dbReference type="ChEBI" id="CHEBI:33019"/>
        <dbReference type="ChEBI" id="CHEBI:35235"/>
        <dbReference type="ChEBI" id="CHEBI:78442"/>
        <dbReference type="ChEBI" id="CHEBI:78517"/>
        <dbReference type="ChEBI" id="CHEBI:456215"/>
        <dbReference type="EC" id="6.1.1.16"/>
    </reaction>
</comment>
<comment type="cofactor">
    <cofactor evidence="1">
        <name>Zn(2+)</name>
        <dbReference type="ChEBI" id="CHEBI:29105"/>
    </cofactor>
    <text evidence="1">Binds 1 zinc ion per subunit.</text>
</comment>
<comment type="subunit">
    <text evidence="1">Monomer.</text>
</comment>
<comment type="subcellular location">
    <subcellularLocation>
        <location evidence="1">Cytoplasm</location>
    </subcellularLocation>
</comment>
<comment type="similarity">
    <text evidence="1">Belongs to the class-I aminoacyl-tRNA synthetase family.</text>
</comment>
<comment type="sequence caution" evidence="2">
    <conflict type="erroneous initiation">
        <sequence resource="EMBL-CDS" id="AAQ59420"/>
    </conflict>
</comment>
<protein>
    <recommendedName>
        <fullName evidence="1">Cysteine--tRNA ligase</fullName>
        <ecNumber evidence="1">6.1.1.16</ecNumber>
    </recommendedName>
    <alternativeName>
        <fullName evidence="1">Cysteinyl-tRNA synthetase</fullName>
        <shortName evidence="1">CysRS</shortName>
    </alternativeName>
</protein>
<gene>
    <name evidence="1" type="primary">cysS</name>
    <name type="ordered locus">CV_1746</name>
</gene>
<dbReference type="EC" id="6.1.1.16" evidence="1"/>
<dbReference type="EMBL" id="AE016825">
    <property type="protein sequence ID" value="AAQ59420.1"/>
    <property type="status" value="ALT_INIT"/>
    <property type="molecule type" value="Genomic_DNA"/>
</dbReference>
<dbReference type="RefSeq" id="WP_043597661.1">
    <property type="nucleotide sequence ID" value="NC_005085.1"/>
</dbReference>
<dbReference type="SMR" id="Q7NX82"/>
<dbReference type="STRING" id="243365.CV_1746"/>
<dbReference type="KEGG" id="cvi:CV_1746"/>
<dbReference type="eggNOG" id="COG0215">
    <property type="taxonomic scope" value="Bacteria"/>
</dbReference>
<dbReference type="HOGENOM" id="CLU_013528_0_1_4"/>
<dbReference type="OrthoDB" id="9815130at2"/>
<dbReference type="Proteomes" id="UP000001424">
    <property type="component" value="Chromosome"/>
</dbReference>
<dbReference type="GO" id="GO:0005829">
    <property type="term" value="C:cytosol"/>
    <property type="evidence" value="ECO:0007669"/>
    <property type="project" value="TreeGrafter"/>
</dbReference>
<dbReference type="GO" id="GO:0005524">
    <property type="term" value="F:ATP binding"/>
    <property type="evidence" value="ECO:0007669"/>
    <property type="project" value="UniProtKB-UniRule"/>
</dbReference>
<dbReference type="GO" id="GO:0004817">
    <property type="term" value="F:cysteine-tRNA ligase activity"/>
    <property type="evidence" value="ECO:0007669"/>
    <property type="project" value="UniProtKB-UniRule"/>
</dbReference>
<dbReference type="GO" id="GO:0008270">
    <property type="term" value="F:zinc ion binding"/>
    <property type="evidence" value="ECO:0007669"/>
    <property type="project" value="UniProtKB-UniRule"/>
</dbReference>
<dbReference type="GO" id="GO:0006423">
    <property type="term" value="P:cysteinyl-tRNA aminoacylation"/>
    <property type="evidence" value="ECO:0007669"/>
    <property type="project" value="UniProtKB-UniRule"/>
</dbReference>
<dbReference type="CDD" id="cd07963">
    <property type="entry name" value="Anticodon_Ia_Cys"/>
    <property type="match status" value="1"/>
</dbReference>
<dbReference type="CDD" id="cd00672">
    <property type="entry name" value="CysRS_core"/>
    <property type="match status" value="1"/>
</dbReference>
<dbReference type="FunFam" id="3.40.50.620:FF:000009">
    <property type="entry name" value="Cysteine--tRNA ligase"/>
    <property type="match status" value="1"/>
</dbReference>
<dbReference type="Gene3D" id="1.20.120.1910">
    <property type="entry name" value="Cysteine-tRNA ligase, C-terminal anti-codon recognition domain"/>
    <property type="match status" value="1"/>
</dbReference>
<dbReference type="Gene3D" id="3.40.50.620">
    <property type="entry name" value="HUPs"/>
    <property type="match status" value="1"/>
</dbReference>
<dbReference type="HAMAP" id="MF_00041">
    <property type="entry name" value="Cys_tRNA_synth"/>
    <property type="match status" value="1"/>
</dbReference>
<dbReference type="InterPro" id="IPR015803">
    <property type="entry name" value="Cys-tRNA-ligase"/>
</dbReference>
<dbReference type="InterPro" id="IPR015273">
    <property type="entry name" value="Cys-tRNA-synt_Ia_DALR"/>
</dbReference>
<dbReference type="InterPro" id="IPR024909">
    <property type="entry name" value="Cys-tRNA/MSH_ligase"/>
</dbReference>
<dbReference type="InterPro" id="IPR056411">
    <property type="entry name" value="CysS_C"/>
</dbReference>
<dbReference type="InterPro" id="IPR014729">
    <property type="entry name" value="Rossmann-like_a/b/a_fold"/>
</dbReference>
<dbReference type="InterPro" id="IPR032678">
    <property type="entry name" value="tRNA-synt_1_cat_dom"/>
</dbReference>
<dbReference type="InterPro" id="IPR009080">
    <property type="entry name" value="tRNAsynth_Ia_anticodon-bd"/>
</dbReference>
<dbReference type="NCBIfam" id="TIGR00435">
    <property type="entry name" value="cysS"/>
    <property type="match status" value="1"/>
</dbReference>
<dbReference type="PANTHER" id="PTHR10890:SF3">
    <property type="entry name" value="CYSTEINE--TRNA LIGASE, CYTOPLASMIC"/>
    <property type="match status" value="1"/>
</dbReference>
<dbReference type="PANTHER" id="PTHR10890">
    <property type="entry name" value="CYSTEINYL-TRNA SYNTHETASE"/>
    <property type="match status" value="1"/>
</dbReference>
<dbReference type="Pfam" id="PF23493">
    <property type="entry name" value="CysS_C"/>
    <property type="match status" value="1"/>
</dbReference>
<dbReference type="Pfam" id="PF09190">
    <property type="entry name" value="DALR_2"/>
    <property type="match status" value="1"/>
</dbReference>
<dbReference type="Pfam" id="PF01406">
    <property type="entry name" value="tRNA-synt_1e"/>
    <property type="match status" value="1"/>
</dbReference>
<dbReference type="PRINTS" id="PR00983">
    <property type="entry name" value="TRNASYNTHCYS"/>
</dbReference>
<dbReference type="SMART" id="SM00840">
    <property type="entry name" value="DALR_2"/>
    <property type="match status" value="1"/>
</dbReference>
<dbReference type="SUPFAM" id="SSF47323">
    <property type="entry name" value="Anticodon-binding domain of a subclass of class I aminoacyl-tRNA synthetases"/>
    <property type="match status" value="1"/>
</dbReference>
<dbReference type="SUPFAM" id="SSF52374">
    <property type="entry name" value="Nucleotidylyl transferase"/>
    <property type="match status" value="1"/>
</dbReference>
<proteinExistence type="inferred from homology"/>
<evidence type="ECO:0000255" key="1">
    <source>
        <dbReference type="HAMAP-Rule" id="MF_00041"/>
    </source>
</evidence>
<evidence type="ECO:0000305" key="2"/>
<keyword id="KW-0030">Aminoacyl-tRNA synthetase</keyword>
<keyword id="KW-0067">ATP-binding</keyword>
<keyword id="KW-0963">Cytoplasm</keyword>
<keyword id="KW-0436">Ligase</keyword>
<keyword id="KW-0479">Metal-binding</keyword>
<keyword id="KW-0547">Nucleotide-binding</keyword>
<keyword id="KW-0648">Protein biosynthesis</keyword>
<keyword id="KW-1185">Reference proteome</keyword>
<keyword id="KW-0862">Zinc</keyword>
<accession>Q7NX82</accession>
<feature type="chain" id="PRO_0000159380" description="Cysteine--tRNA ligase">
    <location>
        <begin position="1"/>
        <end position="457"/>
    </location>
</feature>
<feature type="short sequence motif" description="'HIGH' region">
    <location>
        <begin position="30"/>
        <end position="40"/>
    </location>
</feature>
<feature type="short sequence motif" description="'KMSKS' region">
    <location>
        <begin position="266"/>
        <end position="270"/>
    </location>
</feature>
<feature type="binding site" evidence="1">
    <location>
        <position position="28"/>
    </location>
    <ligand>
        <name>Zn(2+)</name>
        <dbReference type="ChEBI" id="CHEBI:29105"/>
    </ligand>
</feature>
<feature type="binding site" evidence="1">
    <location>
        <position position="209"/>
    </location>
    <ligand>
        <name>Zn(2+)</name>
        <dbReference type="ChEBI" id="CHEBI:29105"/>
    </ligand>
</feature>
<feature type="binding site" evidence="1">
    <location>
        <position position="234"/>
    </location>
    <ligand>
        <name>Zn(2+)</name>
        <dbReference type="ChEBI" id="CHEBI:29105"/>
    </ligand>
</feature>
<feature type="binding site" evidence="1">
    <location>
        <position position="238"/>
    </location>
    <ligand>
        <name>Zn(2+)</name>
        <dbReference type="ChEBI" id="CHEBI:29105"/>
    </ligand>
</feature>
<feature type="binding site" evidence="1">
    <location>
        <position position="269"/>
    </location>
    <ligand>
        <name>ATP</name>
        <dbReference type="ChEBI" id="CHEBI:30616"/>
    </ligand>
</feature>